<reference key="1">
    <citation type="journal article" date="2007" name="BMC Plant Biol.">
        <title>Complete plastid genome sequences suggest strong selection for retention of photosynthetic genes in the parasitic plant genus Cuscuta.</title>
        <authorList>
            <person name="McNeal J.R."/>
            <person name="Kuehl J.V."/>
            <person name="Boore J.L."/>
            <person name="dePamphilis C.W."/>
        </authorList>
    </citation>
    <scope>NUCLEOTIDE SEQUENCE [LARGE SCALE GENOMIC DNA]</scope>
</reference>
<proteinExistence type="inferred from homology"/>
<gene>
    <name evidence="1" type="primary">psbC</name>
</gene>
<geneLocation type="plastid"/>
<protein>
    <recommendedName>
        <fullName evidence="1">Photosystem II CP43 reaction center protein</fullName>
    </recommendedName>
    <alternativeName>
        <fullName evidence="1">PSII 43 kDa protein</fullName>
    </alternativeName>
    <alternativeName>
        <fullName evidence="1">Protein CP-43</fullName>
    </alternativeName>
</protein>
<accession>A8W3C0</accession>
<keyword id="KW-0007">Acetylation</keyword>
<keyword id="KW-0148">Chlorophyll</keyword>
<keyword id="KW-0157">Chromophore</keyword>
<keyword id="KW-0464">Manganese</keyword>
<keyword id="KW-0472">Membrane</keyword>
<keyword id="KW-0479">Metal-binding</keyword>
<keyword id="KW-0597">Phosphoprotein</keyword>
<keyword id="KW-0602">Photosynthesis</keyword>
<keyword id="KW-0604">Photosystem II</keyword>
<keyword id="KW-0934">Plastid</keyword>
<keyword id="KW-0812">Transmembrane</keyword>
<keyword id="KW-1133">Transmembrane helix</keyword>
<organism>
    <name type="scientific">Cuscuta exaltata</name>
    <name type="common">Tall dodder</name>
    <dbReference type="NCBI Taxonomy" id="476139"/>
    <lineage>
        <taxon>Eukaryota</taxon>
        <taxon>Viridiplantae</taxon>
        <taxon>Streptophyta</taxon>
        <taxon>Embryophyta</taxon>
        <taxon>Tracheophyta</taxon>
        <taxon>Spermatophyta</taxon>
        <taxon>Magnoliopsida</taxon>
        <taxon>eudicotyledons</taxon>
        <taxon>Gunneridae</taxon>
        <taxon>Pentapetalae</taxon>
        <taxon>asterids</taxon>
        <taxon>lamiids</taxon>
        <taxon>Solanales</taxon>
        <taxon>Convolvulaceae</taxon>
        <taxon>Cuscuteae</taxon>
        <taxon>Cuscuta</taxon>
        <taxon>Cuscuta subgen. Monogynella</taxon>
    </lineage>
</organism>
<comment type="function">
    <text evidence="1">One of the components of the core complex of photosystem II (PSII). It binds chlorophyll and helps catalyze the primary light-induced photochemical processes of PSII. PSII is a light-driven water:plastoquinone oxidoreductase, using light energy to abstract electrons from H(2)O, generating O(2) and a proton gradient subsequently used for ATP formation.</text>
</comment>
<comment type="cofactor">
    <text evidence="1">Binds multiple chlorophylls and provides some of the ligands for the Ca-4Mn-5O cluster of the oxygen-evolving complex. It may also provide a ligand for a Cl- that is required for oxygen evolution. PSII binds additional chlorophylls, carotenoids and specific lipids.</text>
</comment>
<comment type="subunit">
    <text evidence="1">PSII is composed of 1 copy each of membrane proteins PsbA, PsbB, PsbC, PsbD, PsbE, PsbF, PsbH, PsbI, PsbJ, PsbK, PsbL, PsbM, PsbT, PsbX, PsbY, PsbZ, Psb30/Ycf12, at least 3 peripheral proteins of the oxygen-evolving complex and a large number of cofactors. It forms dimeric complexes.</text>
</comment>
<comment type="subcellular location">
    <subcellularLocation>
        <location evidence="2">Plastid membrane</location>
        <topology evidence="2">Multi-pass membrane protein</topology>
    </subcellularLocation>
</comment>
<comment type="similarity">
    <text evidence="1">Belongs to the PsbB/PsbC family. PsbC subfamily.</text>
</comment>
<comment type="caution">
    <text evidence="2">Young tissue from this organism is photosynthetic and contains some thylakoids, although the photosynthetic activity does not exceed the light compensation point.</text>
</comment>
<sequence length="473" mass="51923">MKTLYSLRRFYHVETLFNGTLALAGRDQETTGFAWWAGNARLINLSGKLLGAHVAHAGLIVFWAGAMNLFEVAHFVPEKPMYEQGLILLPHLATLGWGVGPGGEVIDTFPYFVSGVLHLISSAVLGFGGIYHALLGPETLEESFPFFGYVWKDRNKMTTILGIHLILLGIGAFLLVLKALYFGGVYDTWAPGGGDVRKIANLTLSPSLIFGYLLKSPFGGEGWIVSVDDLEDIIGGHVWLGSICILGGIWHILTKPFAWARRAFVWSGEAYLSYSLGALSIFGFTACCFVWFNNTAYPSEFYGPTGPEASQAQAFTFLVRDQRLGANVGSAQGPTGLGKYLMRSPTGEVIFGGETMRFWDLRAPWLEPLRGPNGLDLNRLKKDIQPWQERRSAEYMTHAPLGSLNSVGGVATEINAVNYVSPRSWLATSHFVLGFFFFIGHLWHAGRARAAAAGFEKGIDRDFEPVLSMTPLN</sequence>
<dbReference type="EMBL" id="EU189132">
    <property type="protein sequence ID" value="ABW83691.1"/>
    <property type="molecule type" value="Genomic_DNA"/>
</dbReference>
<dbReference type="RefSeq" id="YP_001542527.1">
    <property type="nucleotide sequence ID" value="NC_009963.1"/>
</dbReference>
<dbReference type="SMR" id="A8W3C0"/>
<dbReference type="GeneID" id="5729604"/>
<dbReference type="GO" id="GO:0009523">
    <property type="term" value="C:photosystem II"/>
    <property type="evidence" value="ECO:0007669"/>
    <property type="project" value="UniProtKB-KW"/>
</dbReference>
<dbReference type="GO" id="GO:0042170">
    <property type="term" value="C:plastid membrane"/>
    <property type="evidence" value="ECO:0007669"/>
    <property type="project" value="UniProtKB-SubCell"/>
</dbReference>
<dbReference type="GO" id="GO:0042651">
    <property type="term" value="C:thylakoid membrane"/>
    <property type="evidence" value="ECO:0007669"/>
    <property type="project" value="UniProtKB-UniRule"/>
</dbReference>
<dbReference type="GO" id="GO:0016168">
    <property type="term" value="F:chlorophyll binding"/>
    <property type="evidence" value="ECO:0007669"/>
    <property type="project" value="UniProtKB-UniRule"/>
</dbReference>
<dbReference type="GO" id="GO:0045156">
    <property type="term" value="F:electron transporter, transferring electrons within the cyclic electron transport pathway of photosynthesis activity"/>
    <property type="evidence" value="ECO:0007669"/>
    <property type="project" value="InterPro"/>
</dbReference>
<dbReference type="GO" id="GO:0046872">
    <property type="term" value="F:metal ion binding"/>
    <property type="evidence" value="ECO:0007669"/>
    <property type="project" value="UniProtKB-KW"/>
</dbReference>
<dbReference type="GO" id="GO:0009772">
    <property type="term" value="P:photosynthetic electron transport in photosystem II"/>
    <property type="evidence" value="ECO:0007669"/>
    <property type="project" value="InterPro"/>
</dbReference>
<dbReference type="FunFam" id="1.10.10.670:FF:000001">
    <property type="entry name" value="Photosystem II CP43 reaction center protein"/>
    <property type="match status" value="1"/>
</dbReference>
<dbReference type="Gene3D" id="1.10.10.670">
    <property type="entry name" value="photosystem ii from thermosynechococcus elongatus"/>
    <property type="match status" value="1"/>
</dbReference>
<dbReference type="HAMAP" id="MF_01496">
    <property type="entry name" value="PSII_PsbC_CP43"/>
    <property type="match status" value="1"/>
</dbReference>
<dbReference type="InterPro" id="IPR000932">
    <property type="entry name" value="PS_antenna-like"/>
</dbReference>
<dbReference type="InterPro" id="IPR036001">
    <property type="entry name" value="PS_II_antenna-like_sf"/>
</dbReference>
<dbReference type="InterPro" id="IPR005869">
    <property type="entry name" value="PSII_PsbC"/>
</dbReference>
<dbReference type="InterPro" id="IPR044900">
    <property type="entry name" value="PSII_PsbC_sf"/>
</dbReference>
<dbReference type="NCBIfam" id="TIGR01153">
    <property type="entry name" value="psbC"/>
    <property type="match status" value="1"/>
</dbReference>
<dbReference type="Pfam" id="PF00421">
    <property type="entry name" value="PSII"/>
    <property type="match status" value="1"/>
</dbReference>
<dbReference type="SUPFAM" id="SSF161077">
    <property type="entry name" value="Photosystem II antenna protein-like"/>
    <property type="match status" value="1"/>
</dbReference>
<name>PSBC_CUSEX</name>
<feature type="propeptide" id="PRO_0000431134" evidence="1">
    <location>
        <begin position="1"/>
        <end position="14"/>
    </location>
</feature>
<feature type="chain" id="PRO_0000361362" description="Photosystem II CP43 reaction center protein" evidence="1">
    <location>
        <begin position="15"/>
        <end position="473"/>
    </location>
</feature>
<feature type="transmembrane region" description="Helical" evidence="1">
    <location>
        <begin position="69"/>
        <end position="93"/>
    </location>
</feature>
<feature type="transmembrane region" description="Helical" evidence="1">
    <location>
        <begin position="134"/>
        <end position="155"/>
    </location>
</feature>
<feature type="transmembrane region" description="Helical" evidence="1">
    <location>
        <begin position="178"/>
        <end position="200"/>
    </location>
</feature>
<feature type="transmembrane region" description="Helical" evidence="1">
    <location>
        <begin position="255"/>
        <end position="275"/>
    </location>
</feature>
<feature type="transmembrane region" description="Helical" evidence="1">
    <location>
        <begin position="291"/>
        <end position="312"/>
    </location>
</feature>
<feature type="transmembrane region" description="Helical" evidence="1">
    <location>
        <begin position="447"/>
        <end position="471"/>
    </location>
</feature>
<feature type="binding site" evidence="1">
    <location>
        <position position="367"/>
    </location>
    <ligand>
        <name>[CaMn4O5] cluster</name>
        <dbReference type="ChEBI" id="CHEBI:189552"/>
    </ligand>
</feature>
<feature type="modified residue" description="N-acetylthreonine" evidence="1">
    <location>
        <position position="15"/>
    </location>
</feature>
<feature type="modified residue" description="Phosphothreonine" evidence="1">
    <location>
        <position position="15"/>
    </location>
</feature>
<evidence type="ECO:0000255" key="1">
    <source>
        <dbReference type="HAMAP-Rule" id="MF_01496"/>
    </source>
</evidence>
<evidence type="ECO:0000305" key="2"/>